<proteinExistence type="evidence at protein level"/>
<accession>Q54VZ4</accession>
<sequence length="181" mass="20523">MAIDKSKRFLRKTGRKTLVSQNPYHALLVKLYRFLARRTNSKFNKVVLKRLLQTKTNRPPVSISRIANLMKDRKSGKIAVCVGTVVDDERLLDCPKLTVCALRFTETARSRIVKAGGKALSFDQFALVRPRGNNTFLIKGVTKAREVYKHFGRAPGLPGSHARPYVRSEGIKFQRSKTRNP</sequence>
<comment type="subcellular location">
    <subcellularLocation>
        <location evidence="1">Cytoplasm</location>
    </subcellularLocation>
</comment>
<comment type="similarity">
    <text evidence="2">Belongs to the eukaryotic ribosomal protein eL18 family.</text>
</comment>
<gene>
    <name type="primary">rpl18</name>
    <name type="ORF">DDB_G0279997</name>
</gene>
<feature type="chain" id="PRO_0000291625" description="Large ribosomal subunit protein eL18">
    <location>
        <begin position="1"/>
        <end position="181"/>
    </location>
</feature>
<reference key="1">
    <citation type="journal article" date="2005" name="Nature">
        <title>The genome of the social amoeba Dictyostelium discoideum.</title>
        <authorList>
            <person name="Eichinger L."/>
            <person name="Pachebat J.A."/>
            <person name="Gloeckner G."/>
            <person name="Rajandream M.A."/>
            <person name="Sucgang R."/>
            <person name="Berriman M."/>
            <person name="Song J."/>
            <person name="Olsen R."/>
            <person name="Szafranski K."/>
            <person name="Xu Q."/>
            <person name="Tunggal B."/>
            <person name="Kummerfeld S."/>
            <person name="Madera M."/>
            <person name="Konfortov B.A."/>
            <person name="Rivero F."/>
            <person name="Bankier A.T."/>
            <person name="Lehmann R."/>
            <person name="Hamlin N."/>
            <person name="Davies R."/>
            <person name="Gaudet P."/>
            <person name="Fey P."/>
            <person name="Pilcher K."/>
            <person name="Chen G."/>
            <person name="Saunders D."/>
            <person name="Sodergren E.J."/>
            <person name="Davis P."/>
            <person name="Kerhornou A."/>
            <person name="Nie X."/>
            <person name="Hall N."/>
            <person name="Anjard C."/>
            <person name="Hemphill L."/>
            <person name="Bason N."/>
            <person name="Farbrother P."/>
            <person name="Desany B."/>
            <person name="Just E."/>
            <person name="Morio T."/>
            <person name="Rost R."/>
            <person name="Churcher C.M."/>
            <person name="Cooper J."/>
            <person name="Haydock S."/>
            <person name="van Driessche N."/>
            <person name="Cronin A."/>
            <person name="Goodhead I."/>
            <person name="Muzny D.M."/>
            <person name="Mourier T."/>
            <person name="Pain A."/>
            <person name="Lu M."/>
            <person name="Harper D."/>
            <person name="Lindsay R."/>
            <person name="Hauser H."/>
            <person name="James K.D."/>
            <person name="Quiles M."/>
            <person name="Madan Babu M."/>
            <person name="Saito T."/>
            <person name="Buchrieser C."/>
            <person name="Wardroper A."/>
            <person name="Felder M."/>
            <person name="Thangavelu M."/>
            <person name="Johnson D."/>
            <person name="Knights A."/>
            <person name="Loulseged H."/>
            <person name="Mungall K.L."/>
            <person name="Oliver K."/>
            <person name="Price C."/>
            <person name="Quail M.A."/>
            <person name="Urushihara H."/>
            <person name="Hernandez J."/>
            <person name="Rabbinowitsch E."/>
            <person name="Steffen D."/>
            <person name="Sanders M."/>
            <person name="Ma J."/>
            <person name="Kohara Y."/>
            <person name="Sharp S."/>
            <person name="Simmonds M.N."/>
            <person name="Spiegler S."/>
            <person name="Tivey A."/>
            <person name="Sugano S."/>
            <person name="White B."/>
            <person name="Walker D."/>
            <person name="Woodward J.R."/>
            <person name="Winckler T."/>
            <person name="Tanaka Y."/>
            <person name="Shaulsky G."/>
            <person name="Schleicher M."/>
            <person name="Weinstock G.M."/>
            <person name="Rosenthal A."/>
            <person name="Cox E.C."/>
            <person name="Chisholm R.L."/>
            <person name="Gibbs R.A."/>
            <person name="Loomis W.F."/>
            <person name="Platzer M."/>
            <person name="Kay R.R."/>
            <person name="Williams J.G."/>
            <person name="Dear P.H."/>
            <person name="Noegel A.A."/>
            <person name="Barrell B.G."/>
            <person name="Kuspa A."/>
        </authorList>
    </citation>
    <scope>NUCLEOTIDE SEQUENCE [LARGE SCALE GENOMIC DNA]</scope>
    <source>
        <strain>AX4</strain>
    </source>
</reference>
<reference key="2">
    <citation type="submission" date="2010-01" db="UniProtKB">
        <authorList>
            <person name="Bienvenut W.V."/>
            <person name="Veltman D.M."/>
            <person name="Insall R.H."/>
        </authorList>
    </citation>
    <scope>PROTEIN SEQUENCE OF 119-139</scope>
    <scope>IDENTIFICATION BY MASS SPECTROMETRY</scope>
</reference>
<dbReference type="EMBL" id="AAFI02000035">
    <property type="protein sequence ID" value="EAL67470.1"/>
    <property type="molecule type" value="Genomic_DNA"/>
</dbReference>
<dbReference type="RefSeq" id="XP_641456.1">
    <property type="nucleotide sequence ID" value="XM_636364.1"/>
</dbReference>
<dbReference type="SMR" id="Q54VZ4"/>
<dbReference type="FunCoup" id="Q54VZ4">
    <property type="interactions" value="660"/>
</dbReference>
<dbReference type="STRING" id="44689.Q54VZ4"/>
<dbReference type="PaxDb" id="44689-DDB0229960"/>
<dbReference type="EnsemblProtists" id="EAL67470">
    <property type="protein sequence ID" value="EAL67470"/>
    <property type="gene ID" value="DDB_G0279997"/>
</dbReference>
<dbReference type="GeneID" id="8622342"/>
<dbReference type="KEGG" id="ddi:DDB_G0279997"/>
<dbReference type="dictyBase" id="DDB_G0279997">
    <property type="gene designation" value="rpl18"/>
</dbReference>
<dbReference type="VEuPathDB" id="AmoebaDB:DDB_G0279997"/>
<dbReference type="eggNOG" id="KOG1714">
    <property type="taxonomic scope" value="Eukaryota"/>
</dbReference>
<dbReference type="HOGENOM" id="CLU_080024_0_0_1"/>
<dbReference type="InParanoid" id="Q54VZ4"/>
<dbReference type="OMA" id="IDICHKN"/>
<dbReference type="PhylomeDB" id="Q54VZ4"/>
<dbReference type="Reactome" id="R-DDI-156827">
    <property type="pathway name" value="L13a-mediated translational silencing of Ceruloplasmin expression"/>
</dbReference>
<dbReference type="Reactome" id="R-DDI-1799339">
    <property type="pathway name" value="SRP-dependent cotranslational protein targeting to membrane"/>
</dbReference>
<dbReference type="Reactome" id="R-DDI-72689">
    <property type="pathway name" value="Formation of a pool of free 40S subunits"/>
</dbReference>
<dbReference type="Reactome" id="R-DDI-72706">
    <property type="pathway name" value="GTP hydrolysis and joining of the 60S ribosomal subunit"/>
</dbReference>
<dbReference type="Reactome" id="R-DDI-975956">
    <property type="pathway name" value="Nonsense Mediated Decay (NMD) independent of the Exon Junction Complex (EJC)"/>
</dbReference>
<dbReference type="Reactome" id="R-DDI-975957">
    <property type="pathway name" value="Nonsense Mediated Decay (NMD) enhanced by the Exon Junction Complex (EJC)"/>
</dbReference>
<dbReference type="PRO" id="PR:Q54VZ4"/>
<dbReference type="Proteomes" id="UP000002195">
    <property type="component" value="Chromosome 3"/>
</dbReference>
<dbReference type="GO" id="GO:0022625">
    <property type="term" value="C:cytosolic large ribosomal subunit"/>
    <property type="evidence" value="ECO:0000318"/>
    <property type="project" value="GO_Central"/>
</dbReference>
<dbReference type="GO" id="GO:0003723">
    <property type="term" value="F:RNA binding"/>
    <property type="evidence" value="ECO:0000318"/>
    <property type="project" value="GO_Central"/>
</dbReference>
<dbReference type="GO" id="GO:0003735">
    <property type="term" value="F:structural constituent of ribosome"/>
    <property type="evidence" value="ECO:0000318"/>
    <property type="project" value="GO_Central"/>
</dbReference>
<dbReference type="GO" id="GO:0006412">
    <property type="term" value="P:translation"/>
    <property type="evidence" value="ECO:0007669"/>
    <property type="project" value="InterPro"/>
</dbReference>
<dbReference type="FunFam" id="3.100.10.10:FF:000001">
    <property type="entry name" value="60S ribosomal protein L18"/>
    <property type="match status" value="1"/>
</dbReference>
<dbReference type="Gene3D" id="3.100.10.10">
    <property type="match status" value="1"/>
</dbReference>
<dbReference type="InterPro" id="IPR000039">
    <property type="entry name" value="Ribosomal_eL18"/>
</dbReference>
<dbReference type="InterPro" id="IPR021131">
    <property type="entry name" value="Ribosomal_uL15/eL18"/>
</dbReference>
<dbReference type="InterPro" id="IPR036227">
    <property type="entry name" value="Ribosomal_uL15/eL18_sf"/>
</dbReference>
<dbReference type="PANTHER" id="PTHR10934">
    <property type="entry name" value="60S RIBOSOMAL PROTEIN L18"/>
    <property type="match status" value="1"/>
</dbReference>
<dbReference type="PANTHER" id="PTHR10934:SF2">
    <property type="entry name" value="LARGE RIBOSOMAL SUBUNIT PROTEIN EL18"/>
    <property type="match status" value="1"/>
</dbReference>
<dbReference type="Pfam" id="PF17135">
    <property type="entry name" value="Ribosomal_L18"/>
    <property type="match status" value="1"/>
</dbReference>
<dbReference type="SUPFAM" id="SSF52080">
    <property type="entry name" value="Ribosomal proteins L15p and L18e"/>
    <property type="match status" value="1"/>
</dbReference>
<evidence type="ECO:0000250" key="1"/>
<evidence type="ECO:0000305" key="2"/>
<protein>
    <recommendedName>
        <fullName evidence="2">Large ribosomal subunit protein eL18</fullName>
    </recommendedName>
    <alternativeName>
        <fullName>60S ribosomal protein L18</fullName>
    </alternativeName>
</protein>
<organism>
    <name type="scientific">Dictyostelium discoideum</name>
    <name type="common">Social amoeba</name>
    <dbReference type="NCBI Taxonomy" id="44689"/>
    <lineage>
        <taxon>Eukaryota</taxon>
        <taxon>Amoebozoa</taxon>
        <taxon>Evosea</taxon>
        <taxon>Eumycetozoa</taxon>
        <taxon>Dictyostelia</taxon>
        <taxon>Dictyosteliales</taxon>
        <taxon>Dictyosteliaceae</taxon>
        <taxon>Dictyostelium</taxon>
    </lineage>
</organism>
<keyword id="KW-0963">Cytoplasm</keyword>
<keyword id="KW-0903">Direct protein sequencing</keyword>
<keyword id="KW-1185">Reference proteome</keyword>
<keyword id="KW-0687">Ribonucleoprotein</keyword>
<keyword id="KW-0689">Ribosomal protein</keyword>
<name>RL18_DICDI</name>